<comment type="function">
    <text evidence="1">Catalyzes cyanide-resistant oxygen consumption. May increase respiration when the cytochrome respiratory pathway is restricted, or in response to low temperatures (By similarity).</text>
</comment>
<comment type="cofactor">
    <cofactor evidence="2">
        <name>Fe cation</name>
        <dbReference type="ChEBI" id="CHEBI:24875"/>
    </cofactor>
    <text evidence="2">Binds 2 iron ions per subunit.</text>
</comment>
<comment type="subcellular location">
    <subcellularLocation>
        <location evidence="1">Mitochondrion inner membrane</location>
        <topology evidence="1">Multi-pass membrane protein</topology>
        <orientation evidence="1">Matrix side</orientation>
    </subcellularLocation>
</comment>
<comment type="similarity">
    <text evidence="4">Belongs to the alternative oxidase family.</text>
</comment>
<name>AOX_BLUGR</name>
<organism>
    <name type="scientific">Blumeria graminis</name>
    <name type="common">Powdery mildew</name>
    <name type="synonym">Oidium monilioides</name>
    <dbReference type="NCBI Taxonomy" id="34373"/>
    <lineage>
        <taxon>Eukaryota</taxon>
        <taxon>Fungi</taxon>
        <taxon>Dikarya</taxon>
        <taxon>Ascomycota</taxon>
        <taxon>Pezizomycotina</taxon>
        <taxon>Leotiomycetes</taxon>
        <taxon>Erysiphales</taxon>
        <taxon>Erysiphaceae</taxon>
        <taxon>Blumeria</taxon>
    </lineage>
</organism>
<protein>
    <recommendedName>
        <fullName>Alternative oxidase, mitochondrial</fullName>
        <ecNumber>1.-.-.-</ecNumber>
    </recommendedName>
</protein>
<feature type="transit peptide" description="Mitochondrion" evidence="3">
    <location>
        <begin position="1"/>
        <end status="unknown"/>
    </location>
</feature>
<feature type="chain" id="PRO_0000001715" description="Alternative oxidase, mitochondrial">
    <location>
        <begin status="unknown"/>
        <end position="358"/>
    </location>
</feature>
<feature type="transmembrane region" description="Helical" evidence="3">
    <location>
        <begin position="152"/>
        <end position="172"/>
    </location>
</feature>
<feature type="transmembrane region" description="Helical" evidence="3">
    <location>
        <begin position="217"/>
        <end position="237"/>
    </location>
</feature>
<feature type="binding site" evidence="2">
    <location>
        <position position="159"/>
    </location>
    <ligand>
        <name>Fe cation</name>
        <dbReference type="ChEBI" id="CHEBI:24875"/>
        <label>1</label>
    </ligand>
</feature>
<feature type="binding site" evidence="3">
    <location>
        <position position="159"/>
    </location>
    <ligand>
        <name>Fe cation</name>
        <dbReference type="ChEBI" id="CHEBI:24875"/>
    </ligand>
</feature>
<feature type="binding site" evidence="2">
    <location>
        <position position="198"/>
    </location>
    <ligand>
        <name>Fe cation</name>
        <dbReference type="ChEBI" id="CHEBI:24875"/>
        <label>1</label>
    </ligand>
</feature>
<feature type="binding site" evidence="2">
    <location>
        <position position="198"/>
    </location>
    <ligand>
        <name>Fe cation</name>
        <dbReference type="ChEBI" id="CHEBI:24875"/>
        <label>2</label>
    </ligand>
</feature>
<feature type="binding site" evidence="3">
    <location>
        <position position="198"/>
    </location>
    <ligand>
        <name>Fe cation</name>
        <dbReference type="ChEBI" id="CHEBI:24875"/>
    </ligand>
</feature>
<feature type="binding site" evidence="2">
    <location>
        <position position="201"/>
    </location>
    <ligand>
        <name>Fe cation</name>
        <dbReference type="ChEBI" id="CHEBI:24875"/>
        <label>1</label>
    </ligand>
</feature>
<feature type="binding site" evidence="3">
    <location>
        <position position="201"/>
    </location>
    <ligand>
        <name>Fe cation</name>
        <dbReference type="ChEBI" id="CHEBI:24875"/>
    </ligand>
</feature>
<feature type="binding site" evidence="2">
    <location>
        <position position="249"/>
    </location>
    <ligand>
        <name>Fe cation</name>
        <dbReference type="ChEBI" id="CHEBI:24875"/>
        <label>2</label>
    </ligand>
</feature>
<feature type="binding site" evidence="3">
    <location>
        <position position="250"/>
    </location>
    <ligand>
        <name>Fe cation</name>
        <dbReference type="ChEBI" id="CHEBI:24875"/>
    </ligand>
</feature>
<feature type="binding site" evidence="2">
    <location>
        <position position="306"/>
    </location>
    <ligand>
        <name>Fe cation</name>
        <dbReference type="ChEBI" id="CHEBI:24875"/>
        <label>1</label>
    </ligand>
</feature>
<feature type="binding site" evidence="2">
    <location>
        <position position="306"/>
    </location>
    <ligand>
        <name>Fe cation</name>
        <dbReference type="ChEBI" id="CHEBI:24875"/>
        <label>2</label>
    </ligand>
</feature>
<feature type="binding site" evidence="3">
    <location>
        <position position="306"/>
    </location>
    <ligand>
        <name>Fe cation</name>
        <dbReference type="ChEBI" id="CHEBI:24875"/>
    </ligand>
</feature>
<feature type="binding site" evidence="2">
    <location>
        <position position="309"/>
    </location>
    <ligand>
        <name>Fe cation</name>
        <dbReference type="ChEBI" id="CHEBI:24875"/>
        <label>2</label>
    </ligand>
</feature>
<feature type="binding site" evidence="3">
    <location>
        <position position="309"/>
    </location>
    <ligand>
        <name>Fe cation</name>
        <dbReference type="ChEBI" id="CHEBI:24875"/>
    </ligand>
</feature>
<reference key="1">
    <citation type="submission" date="2000-12" db="EMBL/GenBank/DDBJ databases">
        <title>Isolation and characterization of an alternative oxidase gene from Blumeria graminis.</title>
        <authorList>
            <person name="Zhang Z."/>
            <person name="Gurr S.J."/>
        </authorList>
    </citation>
    <scope>NUCLEOTIDE SEQUENCE [GENOMIC DNA]</scope>
</reference>
<dbReference type="EC" id="1.-.-.-"/>
<dbReference type="EMBL" id="AF327336">
    <property type="protein sequence ID" value="AAL56983.1"/>
    <property type="molecule type" value="Genomic_DNA"/>
</dbReference>
<dbReference type="SMR" id="Q8X1N9"/>
<dbReference type="EnsemblFungi" id="BLGH_03428-mRNA-1">
    <property type="protein sequence ID" value="BLGH_03428-mRNA-1"/>
    <property type="gene ID" value="BLGH_03428"/>
</dbReference>
<dbReference type="VEuPathDB" id="FungiDB:BGT96224V316_LOCUS5787"/>
<dbReference type="VEuPathDB" id="FungiDB:BGTH12_LOCUS5360"/>
<dbReference type="GO" id="GO:0005743">
    <property type="term" value="C:mitochondrial inner membrane"/>
    <property type="evidence" value="ECO:0007669"/>
    <property type="project" value="UniProtKB-SubCell"/>
</dbReference>
<dbReference type="GO" id="GO:0009916">
    <property type="term" value="F:alternative oxidase activity"/>
    <property type="evidence" value="ECO:0007669"/>
    <property type="project" value="InterPro"/>
</dbReference>
<dbReference type="GO" id="GO:0046872">
    <property type="term" value="F:metal ion binding"/>
    <property type="evidence" value="ECO:0007669"/>
    <property type="project" value="UniProtKB-KW"/>
</dbReference>
<dbReference type="GO" id="GO:0010230">
    <property type="term" value="P:alternative respiration"/>
    <property type="evidence" value="ECO:0007669"/>
    <property type="project" value="TreeGrafter"/>
</dbReference>
<dbReference type="CDD" id="cd01053">
    <property type="entry name" value="AOX"/>
    <property type="match status" value="1"/>
</dbReference>
<dbReference type="FunFam" id="1.20.1260.140:FF:000002">
    <property type="entry name" value="Alternative oxidase"/>
    <property type="match status" value="1"/>
</dbReference>
<dbReference type="Gene3D" id="1.20.1260.140">
    <property type="entry name" value="Alternative oxidase"/>
    <property type="match status" value="1"/>
</dbReference>
<dbReference type="InterPro" id="IPR002680">
    <property type="entry name" value="AOX"/>
</dbReference>
<dbReference type="InterPro" id="IPR038659">
    <property type="entry name" value="AOX_sf"/>
</dbReference>
<dbReference type="PANTHER" id="PTHR31803">
    <property type="entry name" value="ALTERNATIVE OXIDASE"/>
    <property type="match status" value="1"/>
</dbReference>
<dbReference type="PANTHER" id="PTHR31803:SF3">
    <property type="entry name" value="ALTERNATIVE OXIDASE"/>
    <property type="match status" value="1"/>
</dbReference>
<dbReference type="Pfam" id="PF01786">
    <property type="entry name" value="AOX"/>
    <property type="match status" value="1"/>
</dbReference>
<dbReference type="PIRSF" id="PIRSF005229">
    <property type="entry name" value="AOX"/>
    <property type="match status" value="1"/>
</dbReference>
<sequence length="358" mass="41848">MYLSRLPPRSIPCRSINQISRVVARSSKSRLEFVGSYQNSLTTNQTRCLRPFSSTSRSQLRDYFPEADHEHIKKTEAAWPHPNYPKEQMLTNISYAHRTPKDFSDRIALYLVRFLRFSTDLATGYKHDPVTITENGEKVLKKPYRMSERKWLIRMVFLESVAGVPGMVAGMLRHLHSLRRLKRDNGWIETLLEEAYNERMHLLTFLKMAKPGWFMKFMIIGAQGVFFNSMFLSYLISPRTCHRFVAYLEEEAVLTYSTAIQDIEAGLLPKWTSPEFRIPDLAVQYWKIPEGNRTMRDLLLYIRADEAKHREVNHTLGNLDQNEDPNPFVSEYRDKAAPHPSKGIEHIRPTGWERNEII</sequence>
<proteinExistence type="inferred from homology"/>
<evidence type="ECO:0000250" key="1"/>
<evidence type="ECO:0000250" key="2">
    <source>
        <dbReference type="UniProtKB" id="Q26710"/>
    </source>
</evidence>
<evidence type="ECO:0000255" key="3"/>
<evidence type="ECO:0000305" key="4"/>
<keyword id="KW-0249">Electron transport</keyword>
<keyword id="KW-0408">Iron</keyword>
<keyword id="KW-0472">Membrane</keyword>
<keyword id="KW-0479">Metal-binding</keyword>
<keyword id="KW-0496">Mitochondrion</keyword>
<keyword id="KW-0999">Mitochondrion inner membrane</keyword>
<keyword id="KW-0560">Oxidoreductase</keyword>
<keyword id="KW-0679">Respiratory chain</keyword>
<keyword id="KW-0809">Transit peptide</keyword>
<keyword id="KW-0812">Transmembrane</keyword>
<keyword id="KW-1133">Transmembrane helix</keyword>
<keyword id="KW-0813">Transport</keyword>
<accession>Q8X1N9</accession>